<comment type="function">
    <text evidence="1">Involved in chromosome condensation, segregation and cell cycle progression. May participate in facilitating chromosome segregation by condensation DNA from both sides of a centrally located replisome during cell division. Not required for mini-F plasmid partitioning. Probably acts via its interaction with MukB and MukE. Overexpression results in anucleate cells. It has a calcium binding activity.</text>
</comment>
<comment type="subunit">
    <text evidence="1">Interacts, and probably forms a ternary complex, with MukE and MukB via its C-terminal region. The complex formation is stimulated by calcium or magnesium. It is required for an interaction between MukE and MukB.</text>
</comment>
<comment type="subcellular location">
    <subcellularLocation>
        <location evidence="1">Cytoplasm</location>
        <location evidence="1">Nucleoid</location>
    </subcellularLocation>
    <text evidence="1">Restricted to the nucleoid region.</text>
</comment>
<comment type="similarity">
    <text evidence="1">Belongs to the MukF family.</text>
</comment>
<keyword id="KW-0106">Calcium</keyword>
<keyword id="KW-0131">Cell cycle</keyword>
<keyword id="KW-0132">Cell division</keyword>
<keyword id="KW-0159">Chromosome partition</keyword>
<keyword id="KW-0963">Cytoplasm</keyword>
<keyword id="KW-0226">DNA condensation</keyword>
<keyword id="KW-1185">Reference proteome</keyword>
<dbReference type="EMBL" id="AE003852">
    <property type="protein sequence ID" value="AAF94866.1"/>
    <property type="molecule type" value="Genomic_DNA"/>
</dbReference>
<dbReference type="PIR" id="F82166">
    <property type="entry name" value="F82166"/>
</dbReference>
<dbReference type="RefSeq" id="NP_231352.1">
    <property type="nucleotide sequence ID" value="NC_002505.1"/>
</dbReference>
<dbReference type="RefSeq" id="WP_001288886.1">
    <property type="nucleotide sequence ID" value="NZ_LT906614.1"/>
</dbReference>
<dbReference type="SMR" id="Q9KRC6"/>
<dbReference type="STRING" id="243277.VC_1716"/>
<dbReference type="DNASU" id="2613721"/>
<dbReference type="EnsemblBacteria" id="AAF94866">
    <property type="protein sequence ID" value="AAF94866"/>
    <property type="gene ID" value="VC_1716"/>
</dbReference>
<dbReference type="KEGG" id="vch:VC_1716"/>
<dbReference type="PATRIC" id="fig|243277.26.peg.1642"/>
<dbReference type="eggNOG" id="COG3006">
    <property type="taxonomic scope" value="Bacteria"/>
</dbReference>
<dbReference type="HOGENOM" id="CLU_049853_0_0_6"/>
<dbReference type="Proteomes" id="UP000000584">
    <property type="component" value="Chromosome 1"/>
</dbReference>
<dbReference type="GO" id="GO:0005737">
    <property type="term" value="C:cytoplasm"/>
    <property type="evidence" value="ECO:0007669"/>
    <property type="project" value="UniProtKB-UniRule"/>
</dbReference>
<dbReference type="GO" id="GO:0009295">
    <property type="term" value="C:nucleoid"/>
    <property type="evidence" value="ECO:0007669"/>
    <property type="project" value="UniProtKB-SubCell"/>
</dbReference>
<dbReference type="GO" id="GO:0005509">
    <property type="term" value="F:calcium ion binding"/>
    <property type="evidence" value="ECO:0007669"/>
    <property type="project" value="UniProtKB-UniRule"/>
</dbReference>
<dbReference type="GO" id="GO:0051301">
    <property type="term" value="P:cell division"/>
    <property type="evidence" value="ECO:0007669"/>
    <property type="project" value="UniProtKB-KW"/>
</dbReference>
<dbReference type="GO" id="GO:0030261">
    <property type="term" value="P:chromosome condensation"/>
    <property type="evidence" value="ECO:0007669"/>
    <property type="project" value="UniProtKB-KW"/>
</dbReference>
<dbReference type="GO" id="GO:0007059">
    <property type="term" value="P:chromosome segregation"/>
    <property type="evidence" value="ECO:0007669"/>
    <property type="project" value="UniProtKB-UniRule"/>
</dbReference>
<dbReference type="GO" id="GO:0006260">
    <property type="term" value="P:DNA replication"/>
    <property type="evidence" value="ECO:0007669"/>
    <property type="project" value="UniProtKB-UniRule"/>
</dbReference>
<dbReference type="CDD" id="cd16337">
    <property type="entry name" value="MukF_C"/>
    <property type="match status" value="1"/>
</dbReference>
<dbReference type="CDD" id="cd16335">
    <property type="entry name" value="MukF_N"/>
    <property type="match status" value="1"/>
</dbReference>
<dbReference type="Gene3D" id="1.20.58.590">
    <property type="entry name" value="Chromosome partition protein MukF, middle domain"/>
    <property type="match status" value="1"/>
</dbReference>
<dbReference type="Gene3D" id="1.10.225.40">
    <property type="entry name" value="MukF, C-terminal domain"/>
    <property type="match status" value="1"/>
</dbReference>
<dbReference type="Gene3D" id="1.10.10.10">
    <property type="entry name" value="Winged helix-like DNA-binding domain superfamily/Winged helix DNA-binding domain"/>
    <property type="match status" value="1"/>
</dbReference>
<dbReference type="HAMAP" id="MF_01803">
    <property type="entry name" value="MukF"/>
    <property type="match status" value="1"/>
</dbReference>
<dbReference type="InterPro" id="IPR005582">
    <property type="entry name" value="Chromosome_partition_MukF"/>
</dbReference>
<dbReference type="InterPro" id="IPR033441">
    <property type="entry name" value="MukF_C"/>
</dbReference>
<dbReference type="InterPro" id="IPR038198">
    <property type="entry name" value="MukF_C_sf"/>
</dbReference>
<dbReference type="InterPro" id="IPR033440">
    <property type="entry name" value="MukF_M"/>
</dbReference>
<dbReference type="InterPro" id="IPR036141">
    <property type="entry name" value="MukF_M_sp"/>
</dbReference>
<dbReference type="InterPro" id="IPR033439">
    <property type="entry name" value="MukF_WHTH"/>
</dbReference>
<dbReference type="InterPro" id="IPR036388">
    <property type="entry name" value="WH-like_DNA-bd_sf"/>
</dbReference>
<dbReference type="InterPro" id="IPR036390">
    <property type="entry name" value="WH_DNA-bd_sf"/>
</dbReference>
<dbReference type="NCBIfam" id="NF003615">
    <property type="entry name" value="PRK05260.1"/>
    <property type="match status" value="1"/>
</dbReference>
<dbReference type="Pfam" id="PF03882">
    <property type="entry name" value="KicB"/>
    <property type="match status" value="1"/>
</dbReference>
<dbReference type="Pfam" id="PF17193">
    <property type="entry name" value="MukF_C"/>
    <property type="match status" value="1"/>
</dbReference>
<dbReference type="Pfam" id="PF17192">
    <property type="entry name" value="MukF_M"/>
    <property type="match status" value="1"/>
</dbReference>
<dbReference type="PIRSF" id="PIRSF018282">
    <property type="entry name" value="MukF"/>
    <property type="match status" value="1"/>
</dbReference>
<dbReference type="SUPFAM" id="SSF140570">
    <property type="entry name" value="MukF C-terminal domain-like"/>
    <property type="match status" value="1"/>
</dbReference>
<dbReference type="SUPFAM" id="SSF46785">
    <property type="entry name" value="Winged helix' DNA-binding domain"/>
    <property type="match status" value="1"/>
</dbReference>
<accession>Q9KRC6</accession>
<organism>
    <name type="scientific">Vibrio cholerae serotype O1 (strain ATCC 39315 / El Tor Inaba N16961)</name>
    <dbReference type="NCBI Taxonomy" id="243277"/>
    <lineage>
        <taxon>Bacteria</taxon>
        <taxon>Pseudomonadati</taxon>
        <taxon>Pseudomonadota</taxon>
        <taxon>Gammaproteobacteria</taxon>
        <taxon>Vibrionales</taxon>
        <taxon>Vibrionaceae</taxon>
        <taxon>Vibrio</taxon>
    </lineage>
</organism>
<proteinExistence type="inferred from homology"/>
<reference key="1">
    <citation type="journal article" date="2000" name="Nature">
        <title>DNA sequence of both chromosomes of the cholera pathogen Vibrio cholerae.</title>
        <authorList>
            <person name="Heidelberg J.F."/>
            <person name="Eisen J.A."/>
            <person name="Nelson W.C."/>
            <person name="Clayton R.A."/>
            <person name="Gwinn M.L."/>
            <person name="Dodson R.J."/>
            <person name="Haft D.H."/>
            <person name="Hickey E.K."/>
            <person name="Peterson J.D."/>
            <person name="Umayam L.A."/>
            <person name="Gill S.R."/>
            <person name="Nelson K.E."/>
            <person name="Read T.D."/>
            <person name="Tettelin H."/>
            <person name="Richardson D.L."/>
            <person name="Ermolaeva M.D."/>
            <person name="Vamathevan J.J."/>
            <person name="Bass S."/>
            <person name="Qin H."/>
            <person name="Dragoi I."/>
            <person name="Sellers P."/>
            <person name="McDonald L.A."/>
            <person name="Utterback T.R."/>
            <person name="Fleischmann R.D."/>
            <person name="Nierman W.C."/>
            <person name="White O."/>
            <person name="Salzberg S.L."/>
            <person name="Smith H.O."/>
            <person name="Colwell R.R."/>
            <person name="Mekalanos J.J."/>
            <person name="Venter J.C."/>
            <person name="Fraser C.M."/>
        </authorList>
    </citation>
    <scope>NUCLEOTIDE SEQUENCE [LARGE SCALE GENOMIC DNA]</scope>
    <source>
        <strain>ATCC 39315 / El Tor Inaba N16961</strain>
    </source>
</reference>
<name>MUKF_VIBCH</name>
<evidence type="ECO:0000255" key="1">
    <source>
        <dbReference type="HAMAP-Rule" id="MF_01803"/>
    </source>
</evidence>
<gene>
    <name evidence="1" type="primary">mukF</name>
    <name type="ordered locus">VC_1716</name>
</gene>
<protein>
    <recommendedName>
        <fullName evidence="1">Chromosome partition protein MukF</fullName>
    </recommendedName>
</protein>
<sequence length="445" mass="51208">MSEFTQDTVQKPIDELVTWVKQYDFSLNLPTERLAFLLAIAVLSNERFDEELGEGELHDAFAIVTRLFAESGEASAFRANNAINDLVKQRLLSRFTSEMTEGASIYRLTPLAIGITDYYVRHREFSKLKLSIQLSMVADEMAKAVESAQQGGSVAHWRKNVFGVLKYSVSEIFDRIDLNQRVMDEQQQSVKEQIADLLNKDWRDAINNCEALLSETSATLRELQDTLQAAGDELQTQILDIQECVYGDLELDFIEETLSALQMKLDRITSWGQQSIDLWIGYDRHVHKFIRTAIDMDQNRAFSQRLRQSMNDYFEQPWYLTYADAERLSDLRDETLTLRDEEVTGHVPTEVEYEELQQVNDELAQRIGDMLKVHKEQGAAIDLALVLRDYLASHPRTHHFDLARMVVDQAVRLGYSESDYRAIQPDWTAINDFGAKVQANVIDRY</sequence>
<feature type="chain" id="PRO_0000211612" description="Chromosome partition protein MukF">
    <location>
        <begin position="1"/>
        <end position="445"/>
    </location>
</feature>
<feature type="region of interest" description="Leucine-zipper">
    <location>
        <begin position="213"/>
        <end position="241"/>
    </location>
</feature>